<sequence>MHDARIFNSSSNKTMNQNDEAGKSKIKPLRTNQRRVIGASKSSSHMGSHVGTTLIIGKNSHSTSHGVRNNSPENTIVIGRRNFSDGQIEYTKPASHSNKFKKDSILRDPNIDSNVEASKKLSEQIQLTVWFHEPRTSTEDVIIDASVIPGLKEGDICELVPLNTFKPHKKPKRLIFIIKNQSLLSKSSSLHTSNNNNNAGATTSTLSANNNNTTKTKTNFQISLISNPLQNLMDLPPRSLVQLKTILDVESIEADTIEIFIKDINLSRDLMWTFSSSLVGTCVYSEKRLTFLSNRTGVVKKIYKNGNELFSALICEKTKVVFRSKSAKLVFLVQLSREMWHFEETGEIMFHKLVNTLFPKIFKKWRDKNTHHAITIVLFTSVDLTNIPWTSLGQGERPNNRRDYFRVVVDQVSIFHWDRIMANLRLEFANFKRDIMLNCQPENNGKFTMAGQSLPSVKGNVLEAINVGIHLVNDRFKNTDLKHSLNHFILVTPGTGLFDVDYSLMHETSKKMLSIDCALDIVCLSQPPLHIVPLFRYRDPSKDGQISHCVPHWCDISFYKDSTANSTQWIPHCKIYELQMMGVMENEINDVKIERYRVPNEAKSMVEAMDKYDSDVFKPVNKDSDSKVTRELSSSPEQSTINSKTGTPKENSKPLSLIWNNRTSLLPNSSTARIDVSTTNSSVLGTVANSGKDVSALSSLYTLNKTSADKSVVHAPSIRADSRKGVKENVSRDRKEFNEITRTKLRPRLQKTEEFYKSDDSVSNTSKSRDILDSKSRNKQSSTKVEEEFETLTNLLWTEIRNPSKESHSDMLSFLRLSRWNDIFPSNIKRRLVKWRSFESPAALPVTTSIFPSTKQLETDYSFQIYSVFLNSENDLEIESTHDLMREMIQLRLLLGFQICYSDQVKKFESSRKPGGNAESLIKYFPKGSCYGSRIYMSLDDEIHRISCDYNGNLYVQMYRKIEELKHSRLLGSKDYRQQSYVPLIRTRYVDEYAPAKFDFINTKPLKYNWNQFDQLIAGYDDAIPPEKRQFHKMKFVVLPANIPKNAYFISNENLTDEEIRVEGLRKLIGLIERGKFVKSDDKESKRKEEILPEISFYTGNLYEFLSDQAETYDATGNEPSNSLMLGENMRFTKSIKLSQLAQELQSPTGVRLVDRTWHFKRHLHCFLGNELVSWFIECFEDIDNRNDATSYGQSLMDRGMIKHVESRHGFLDGYYFYTFEGEYIDKNYKPERLNSGWFNRKKNSSEKGSAVTSPTYTRNNSDTESAKSPVFPVQDNLDLRKITSNSIGQHMYDSETSSMAGSSTKTKQKKKFILSRSVKFNADPLKKSFRPEIVTVHYDRVHNPEHCYHIRLQWLNTTKKFIDDAILNWSRLCERHGLKLVETPWLELCTIPQVNPFHSFVDLKLVINPWTDPEFSDPNILKDNKFYYHLYLMKKSDFLLDNRSTVFFSKDHIEISYSWGKPIFQYAQYIHKTGAYIVELRDNGDLFLAPNNIHITRLNTSLSSVPEQDYLKSYKMDSQKVMLKFRSACTNEKILRGIFKEAKENWREKCSEVVLPAIN</sequence>
<organism>
    <name type="scientific">Debaryomyces hansenii (strain ATCC 36239 / CBS 767 / BCRC 21394 / JCM 1990 / NBRC 0083 / IGC 2968)</name>
    <name type="common">Yeast</name>
    <name type="synonym">Torulaspora hansenii</name>
    <dbReference type="NCBI Taxonomy" id="284592"/>
    <lineage>
        <taxon>Eukaryota</taxon>
        <taxon>Fungi</taxon>
        <taxon>Dikarya</taxon>
        <taxon>Ascomycota</taxon>
        <taxon>Saccharomycotina</taxon>
        <taxon>Pichiomycetes</taxon>
        <taxon>Debaryomycetaceae</taxon>
        <taxon>Debaryomyces</taxon>
    </lineage>
</organism>
<protein>
    <recommendedName>
        <fullName>Vacuolar membrane-associated protein IML1</fullName>
    </recommendedName>
</protein>
<name>IML1_DEBHA</name>
<evidence type="ECO:0000250" key="1"/>
<evidence type="ECO:0000255" key="2">
    <source>
        <dbReference type="PROSITE-ProRule" id="PRU00066"/>
    </source>
</evidence>
<evidence type="ECO:0000256" key="3">
    <source>
        <dbReference type="SAM" id="MobiDB-lite"/>
    </source>
</evidence>
<evidence type="ECO:0000305" key="4"/>
<gene>
    <name type="primary">IML1</name>
    <name type="ordered locus">DEHA2F01320g</name>
</gene>
<dbReference type="EMBL" id="CR382138">
    <property type="protein sequence ID" value="CAG88724.2"/>
    <property type="molecule type" value="Genomic_DNA"/>
</dbReference>
<dbReference type="RefSeq" id="XP_460420.2">
    <property type="nucleotide sequence ID" value="XM_460420.1"/>
</dbReference>
<dbReference type="SMR" id="Q6BN00"/>
<dbReference type="FunCoup" id="Q6BN00">
    <property type="interactions" value="726"/>
</dbReference>
<dbReference type="STRING" id="284592.Q6BN00"/>
<dbReference type="GeneID" id="2903820"/>
<dbReference type="KEGG" id="dha:DEHA2F01320g"/>
<dbReference type="VEuPathDB" id="FungiDB:DEHA2F01320g"/>
<dbReference type="eggNOG" id="KOG3572">
    <property type="taxonomic scope" value="Eukaryota"/>
</dbReference>
<dbReference type="HOGENOM" id="CLU_000935_1_1_1"/>
<dbReference type="InParanoid" id="Q6BN00"/>
<dbReference type="OMA" id="RTWHFKR"/>
<dbReference type="OrthoDB" id="39497at2759"/>
<dbReference type="Proteomes" id="UP000000599">
    <property type="component" value="Chromosome F"/>
</dbReference>
<dbReference type="GO" id="GO:1990130">
    <property type="term" value="C:GATOR1 complex"/>
    <property type="evidence" value="ECO:0007669"/>
    <property type="project" value="EnsemblFungi"/>
</dbReference>
<dbReference type="GO" id="GO:0005774">
    <property type="term" value="C:vacuolar membrane"/>
    <property type="evidence" value="ECO:0007669"/>
    <property type="project" value="UniProtKB-SubCell"/>
</dbReference>
<dbReference type="GO" id="GO:0005096">
    <property type="term" value="F:GTPase activator activity"/>
    <property type="evidence" value="ECO:0007669"/>
    <property type="project" value="EnsemblFungi"/>
</dbReference>
<dbReference type="GO" id="GO:0006995">
    <property type="term" value="P:cellular response to nitrogen starvation"/>
    <property type="evidence" value="ECO:0007669"/>
    <property type="project" value="EnsemblFungi"/>
</dbReference>
<dbReference type="GO" id="GO:0034599">
    <property type="term" value="P:cellular response to oxidative stress"/>
    <property type="evidence" value="ECO:0007669"/>
    <property type="project" value="EnsemblFungi"/>
</dbReference>
<dbReference type="GO" id="GO:0035556">
    <property type="term" value="P:intracellular signal transduction"/>
    <property type="evidence" value="ECO:0007669"/>
    <property type="project" value="InterPro"/>
</dbReference>
<dbReference type="GO" id="GO:0051058">
    <property type="term" value="P:negative regulation of small GTPase mediated signal transduction"/>
    <property type="evidence" value="ECO:0007669"/>
    <property type="project" value="EnsemblFungi"/>
</dbReference>
<dbReference type="GO" id="GO:1904262">
    <property type="term" value="P:negative regulation of TORC1 signaling"/>
    <property type="evidence" value="ECO:0007669"/>
    <property type="project" value="EnsemblFungi"/>
</dbReference>
<dbReference type="GO" id="GO:0010508">
    <property type="term" value="P:positive regulation of autophagy"/>
    <property type="evidence" value="ECO:0007669"/>
    <property type="project" value="EnsemblFungi"/>
</dbReference>
<dbReference type="GO" id="GO:2000785">
    <property type="term" value="P:regulation of autophagosome assembly"/>
    <property type="evidence" value="ECO:0007669"/>
    <property type="project" value="EnsemblFungi"/>
</dbReference>
<dbReference type="CDD" id="cd04449">
    <property type="entry name" value="DEP_DEPDC5-like"/>
    <property type="match status" value="1"/>
</dbReference>
<dbReference type="Gene3D" id="1.10.10.10">
    <property type="entry name" value="Winged helix-like DNA-binding domain superfamily/Winged helix DNA-binding domain"/>
    <property type="match status" value="1"/>
</dbReference>
<dbReference type="InterPro" id="IPR000591">
    <property type="entry name" value="DEP_dom"/>
</dbReference>
<dbReference type="InterPro" id="IPR027244">
    <property type="entry name" value="IML1"/>
</dbReference>
<dbReference type="InterPro" id="IPR048255">
    <property type="entry name" value="IML1_N"/>
</dbReference>
<dbReference type="InterPro" id="IPR036388">
    <property type="entry name" value="WH-like_DNA-bd_sf"/>
</dbReference>
<dbReference type="InterPro" id="IPR036390">
    <property type="entry name" value="WH_DNA-bd_sf"/>
</dbReference>
<dbReference type="PANTHER" id="PTHR13179">
    <property type="entry name" value="DEP DOMAIN CONTAINING PROTEIN 5"/>
    <property type="match status" value="1"/>
</dbReference>
<dbReference type="PANTHER" id="PTHR13179:SF8">
    <property type="entry name" value="GATOR COMPLEX PROTEIN DEPDC5"/>
    <property type="match status" value="1"/>
</dbReference>
<dbReference type="Pfam" id="PF00610">
    <property type="entry name" value="DEP"/>
    <property type="match status" value="1"/>
</dbReference>
<dbReference type="Pfam" id="PF12257">
    <property type="entry name" value="IML1"/>
    <property type="match status" value="1"/>
</dbReference>
<dbReference type="Pfam" id="PF24438">
    <property type="entry name" value="IML1_N_fung"/>
    <property type="match status" value="1"/>
</dbReference>
<dbReference type="SMART" id="SM00049">
    <property type="entry name" value="DEP"/>
    <property type="match status" value="1"/>
</dbReference>
<dbReference type="SUPFAM" id="SSF46785">
    <property type="entry name" value="Winged helix' DNA-binding domain"/>
    <property type="match status" value="1"/>
</dbReference>
<dbReference type="PROSITE" id="PS50186">
    <property type="entry name" value="DEP"/>
    <property type="match status" value="1"/>
</dbReference>
<proteinExistence type="inferred from homology"/>
<accession>Q6BN00</accession>
<feature type="chain" id="PRO_0000301771" description="Vacuolar membrane-associated protein IML1">
    <location>
        <begin position="1"/>
        <end position="1560"/>
    </location>
</feature>
<feature type="domain" description="DEP" evidence="2">
    <location>
        <begin position="1147"/>
        <end position="1222"/>
    </location>
</feature>
<feature type="region of interest" description="Disordered" evidence="3">
    <location>
        <begin position="1"/>
        <end position="30"/>
    </location>
</feature>
<feature type="region of interest" description="Disordered" evidence="3">
    <location>
        <begin position="188"/>
        <end position="212"/>
    </location>
</feature>
<feature type="region of interest" description="Disordered" evidence="3">
    <location>
        <begin position="617"/>
        <end position="654"/>
    </location>
</feature>
<feature type="region of interest" description="Disordered" evidence="3">
    <location>
        <begin position="756"/>
        <end position="784"/>
    </location>
</feature>
<feature type="region of interest" description="Disordered" evidence="3">
    <location>
        <begin position="1237"/>
        <end position="1270"/>
    </location>
</feature>
<feature type="compositionally biased region" description="Polar residues" evidence="3">
    <location>
        <begin position="7"/>
        <end position="19"/>
    </location>
</feature>
<feature type="compositionally biased region" description="Basic and acidic residues" evidence="3">
    <location>
        <begin position="617"/>
        <end position="630"/>
    </location>
</feature>
<feature type="compositionally biased region" description="Polar residues" evidence="3">
    <location>
        <begin position="631"/>
        <end position="649"/>
    </location>
</feature>
<feature type="compositionally biased region" description="Basic and acidic residues" evidence="3">
    <location>
        <begin position="767"/>
        <end position="776"/>
    </location>
</feature>
<feature type="compositionally biased region" description="Polar residues" evidence="3">
    <location>
        <begin position="1247"/>
        <end position="1264"/>
    </location>
</feature>
<keyword id="KW-0472">Membrane</keyword>
<keyword id="KW-1185">Reference proteome</keyword>
<keyword id="KW-0926">Vacuole</keyword>
<reference key="1">
    <citation type="journal article" date="2004" name="Nature">
        <title>Genome evolution in yeasts.</title>
        <authorList>
            <person name="Dujon B."/>
            <person name="Sherman D."/>
            <person name="Fischer G."/>
            <person name="Durrens P."/>
            <person name="Casaregola S."/>
            <person name="Lafontaine I."/>
            <person name="de Montigny J."/>
            <person name="Marck C."/>
            <person name="Neuveglise C."/>
            <person name="Talla E."/>
            <person name="Goffard N."/>
            <person name="Frangeul L."/>
            <person name="Aigle M."/>
            <person name="Anthouard V."/>
            <person name="Babour A."/>
            <person name="Barbe V."/>
            <person name="Barnay S."/>
            <person name="Blanchin S."/>
            <person name="Beckerich J.-M."/>
            <person name="Beyne E."/>
            <person name="Bleykasten C."/>
            <person name="Boisrame A."/>
            <person name="Boyer J."/>
            <person name="Cattolico L."/>
            <person name="Confanioleri F."/>
            <person name="de Daruvar A."/>
            <person name="Despons L."/>
            <person name="Fabre E."/>
            <person name="Fairhead C."/>
            <person name="Ferry-Dumazet H."/>
            <person name="Groppi A."/>
            <person name="Hantraye F."/>
            <person name="Hennequin C."/>
            <person name="Jauniaux N."/>
            <person name="Joyet P."/>
            <person name="Kachouri R."/>
            <person name="Kerrest A."/>
            <person name="Koszul R."/>
            <person name="Lemaire M."/>
            <person name="Lesur I."/>
            <person name="Ma L."/>
            <person name="Muller H."/>
            <person name="Nicaud J.-M."/>
            <person name="Nikolski M."/>
            <person name="Oztas S."/>
            <person name="Ozier-Kalogeropoulos O."/>
            <person name="Pellenz S."/>
            <person name="Potier S."/>
            <person name="Richard G.-F."/>
            <person name="Straub M.-L."/>
            <person name="Suleau A."/>
            <person name="Swennen D."/>
            <person name="Tekaia F."/>
            <person name="Wesolowski-Louvel M."/>
            <person name="Westhof E."/>
            <person name="Wirth B."/>
            <person name="Zeniou-Meyer M."/>
            <person name="Zivanovic Y."/>
            <person name="Bolotin-Fukuhara M."/>
            <person name="Thierry A."/>
            <person name="Bouchier C."/>
            <person name="Caudron B."/>
            <person name="Scarpelli C."/>
            <person name="Gaillardin C."/>
            <person name="Weissenbach J."/>
            <person name="Wincker P."/>
            <person name="Souciet J.-L."/>
        </authorList>
    </citation>
    <scope>NUCLEOTIDE SEQUENCE [LARGE SCALE GENOMIC DNA]</scope>
    <source>
        <strain>ATCC 36239 / CBS 767 / BCRC 21394 / JCM 1990 / NBRC 0083 / IGC 2968</strain>
    </source>
</reference>
<comment type="subcellular location">
    <subcellularLocation>
        <location evidence="1">Vacuole membrane</location>
        <topology evidence="1">Peripheral membrane protein</topology>
    </subcellularLocation>
</comment>
<comment type="similarity">
    <text evidence="4">Belongs to the IML1 family.</text>
</comment>